<feature type="chain" id="PRO_0000096482" description="Regulator of MON1-CCZ1 complex">
    <location>
        <begin position="1"/>
        <end position="657"/>
    </location>
</feature>
<feature type="domain" description="Mic1">
    <location>
        <begin position="471"/>
        <end position="637"/>
    </location>
</feature>
<gene>
    <name type="primary">Rmc1</name>
    <name type="synonym">Mic1</name>
    <name type="synonym">Wdr98</name>
</gene>
<protein>
    <recommendedName>
        <fullName>Regulator of MON1-CCZ1 complex</fullName>
    </recommendedName>
    <alternativeName>
        <fullName>Colon cancer-associated protein Mic1</fullName>
        <shortName>Mic-1</shortName>
    </alternativeName>
</protein>
<reference key="1">
    <citation type="journal article" date="2004" name="Genome Res.">
        <title>The status, quality, and expansion of the NIH full-length cDNA project: the Mammalian Gene Collection (MGC).</title>
        <authorList>
            <consortium name="The MGC Project Team"/>
        </authorList>
    </citation>
    <scope>NUCLEOTIDE SEQUENCE [LARGE SCALE MRNA]</scope>
    <source>
        <tissue>Mammary tumor</tissue>
    </source>
</reference>
<reference key="2">
    <citation type="journal article" date="1997" name="Science">
        <title>Murine model of Niemann-Pick C disease: mutation in a cholesterol homeostasis gene.</title>
        <authorList>
            <person name="Loftus S.K."/>
            <person name="Morris J.A."/>
            <person name="Carstea E.D."/>
            <person name="Gu J.Z."/>
            <person name="Cummings C."/>
            <person name="Brown A."/>
            <person name="Ellison J."/>
            <person name="Ohno K."/>
            <person name="Rosenfeld M.A."/>
            <person name="Tagle D.A."/>
            <person name="Pentchev P.G."/>
            <person name="Pavan W.J."/>
        </authorList>
    </citation>
    <scope>NUCLEOTIDE SEQUENCE [MRNA] OF 353-657</scope>
    <scope>TISSUE SPECIFICITY</scope>
    <source>
        <strain>C57BL/6J</strain>
        <tissue>Embryo</tissue>
    </source>
</reference>
<organism>
    <name type="scientific">Mus musculus</name>
    <name type="common">Mouse</name>
    <dbReference type="NCBI Taxonomy" id="10090"/>
    <lineage>
        <taxon>Eukaryota</taxon>
        <taxon>Metazoa</taxon>
        <taxon>Chordata</taxon>
        <taxon>Craniata</taxon>
        <taxon>Vertebrata</taxon>
        <taxon>Euteleostomi</taxon>
        <taxon>Mammalia</taxon>
        <taxon>Eutheria</taxon>
        <taxon>Euarchontoglires</taxon>
        <taxon>Glires</taxon>
        <taxon>Rodentia</taxon>
        <taxon>Myomorpha</taxon>
        <taxon>Muroidea</taxon>
        <taxon>Muridae</taxon>
        <taxon>Murinae</taxon>
        <taxon>Mus</taxon>
        <taxon>Mus</taxon>
    </lineage>
</organism>
<name>RMC1_MOUSE</name>
<keyword id="KW-0072">Autophagy</keyword>
<keyword id="KW-0967">Endosome</keyword>
<keyword id="KW-0458">Lysosome</keyword>
<keyword id="KW-0472">Membrane</keyword>
<keyword id="KW-1185">Reference proteome</keyword>
<proteinExistence type="evidence at transcript level"/>
<evidence type="ECO:0000250" key="1">
    <source>
        <dbReference type="UniProtKB" id="Q96DM3"/>
    </source>
</evidence>
<evidence type="ECO:0000269" key="2">
    <source>
    </source>
</evidence>
<evidence type="ECO:0000305" key="3"/>
<sequence length="657" mass="74922">MGGEDYYLELCERPVQFEKANPVNCVFFDEANKQVFAVRSGGATGVVVKGPDDRNPISFRMDDRGEVKCIKFSLENKILAVQRTAKAVDFCNFIPDNSQLEYTQECKTKNANILGFCWTSSTEIVFITDQGIEFYQVMPEKRSLKLLKSHNINVNWYTYCPESAVILLSTTVLENVLQPFHFRAGTMSKLPKFEIELPAAPKSTKLSLSERDIAMATIYGQLYILFLRHHSRTSNSTGAEVVLYHLPREGACKKMHILKLNRTGKFALNVVDNLVVVHHQDTETSVIFDIRLRGEFDGTVTFHHPVLPARSIQPYEIPLAGPAAVTSQSPVPCKLYSSSWIVFQPDIIISASQGYLWNLQVKLQPIVNLLPDKGRLMDFLLQRKECKAVVLSVCSQMLSESDRATLPVIATVFDKLNHEYKKYLDADQSYTMAVEAGQSRSNPPLKRPVRTQAVVDQSDVYTQVLSPFVENKEMPHKFVIAVLMEYIRSLNQFQIPVQHYLHELVIKTLVQHNLFYMLHQFLQYHVLSDSKPLACLLLSLESFYPPAHQLSLDMLKRLSTANDEIVEVLLSKHQVLAALRFIRGIGGHDNISARKFLDAARQTDDVMLFYTIFRFFEQRNQRLRGNPNFTPGEHCEEHVAFFKQVFGEQALMRPTTF</sequence>
<dbReference type="EMBL" id="BC021846">
    <property type="protein sequence ID" value="AAH21846.1"/>
    <property type="molecule type" value="mRNA"/>
</dbReference>
<dbReference type="EMBL" id="AF003352">
    <property type="protein sequence ID" value="AAB63375.1"/>
    <property type="status" value="ALT_INIT"/>
    <property type="molecule type" value="mRNA"/>
</dbReference>
<dbReference type="CCDS" id="CCDS29063.1"/>
<dbReference type="RefSeq" id="NP_083899.1">
    <property type="nucleotide sequence ID" value="NM_029623.2"/>
</dbReference>
<dbReference type="SMR" id="Q8VC42"/>
<dbReference type="BioGRID" id="218146">
    <property type="interactions" value="10"/>
</dbReference>
<dbReference type="FunCoup" id="Q8VC42">
    <property type="interactions" value="2383"/>
</dbReference>
<dbReference type="IntAct" id="Q8VC42">
    <property type="interactions" value="2"/>
</dbReference>
<dbReference type="MINT" id="Q8VC42"/>
<dbReference type="STRING" id="10090.ENSMUSP00000025276"/>
<dbReference type="GlyGen" id="Q8VC42">
    <property type="glycosylation" value="2 sites, 1 N-linked glycan (1 site), 1 O-linked glycan (1 site)"/>
</dbReference>
<dbReference type="iPTMnet" id="Q8VC42"/>
<dbReference type="PhosphoSitePlus" id="Q8VC42"/>
<dbReference type="PaxDb" id="10090-ENSMUSP00000025276"/>
<dbReference type="ProteomicsDB" id="300408"/>
<dbReference type="Pumba" id="Q8VC42"/>
<dbReference type="Antibodypedia" id="22041">
    <property type="antibodies" value="216 antibodies from 31 providers"/>
</dbReference>
<dbReference type="DNASU" id="76482"/>
<dbReference type="Ensembl" id="ENSMUST00000025276.15">
    <property type="protein sequence ID" value="ENSMUSP00000025276.9"/>
    <property type="gene ID" value="ENSMUSG00000024410.16"/>
</dbReference>
<dbReference type="GeneID" id="76482"/>
<dbReference type="KEGG" id="mmu:76482"/>
<dbReference type="UCSC" id="uc008eca.1">
    <property type="organism name" value="mouse"/>
</dbReference>
<dbReference type="AGR" id="MGI:1916528"/>
<dbReference type="CTD" id="29919"/>
<dbReference type="MGI" id="MGI:1916528">
    <property type="gene designation" value="Rmc1"/>
</dbReference>
<dbReference type="VEuPathDB" id="HostDB:ENSMUSG00000024410"/>
<dbReference type="eggNOG" id="KOG2377">
    <property type="taxonomic scope" value="Eukaryota"/>
</dbReference>
<dbReference type="GeneTree" id="ENSGT00390000009127"/>
<dbReference type="HOGENOM" id="CLU_022842_0_1_1"/>
<dbReference type="InParanoid" id="Q8VC42"/>
<dbReference type="OMA" id="VWVHNRE"/>
<dbReference type="OrthoDB" id="26384at2759"/>
<dbReference type="PhylomeDB" id="Q8VC42"/>
<dbReference type="TreeFam" id="TF105850"/>
<dbReference type="BioGRID-ORCS" id="76482">
    <property type="hits" value="7 hits in 78 CRISPR screens"/>
</dbReference>
<dbReference type="CD-CODE" id="CE726F99">
    <property type="entry name" value="Postsynaptic density"/>
</dbReference>
<dbReference type="ChiTaRS" id="Rmc1">
    <property type="organism name" value="mouse"/>
</dbReference>
<dbReference type="PRO" id="PR:Q8VC42"/>
<dbReference type="Proteomes" id="UP000000589">
    <property type="component" value="Chromosome 18"/>
</dbReference>
<dbReference type="RNAct" id="Q8VC42">
    <property type="molecule type" value="protein"/>
</dbReference>
<dbReference type="Bgee" id="ENSMUSG00000024410">
    <property type="expression patterns" value="Expressed in granulocyte and 239 other cell types or tissues"/>
</dbReference>
<dbReference type="ExpressionAtlas" id="Q8VC42">
    <property type="expression patterns" value="baseline and differential"/>
</dbReference>
<dbReference type="GO" id="GO:0031902">
    <property type="term" value="C:late endosome membrane"/>
    <property type="evidence" value="ECO:0000250"/>
    <property type="project" value="UniProtKB"/>
</dbReference>
<dbReference type="GO" id="GO:0005765">
    <property type="term" value="C:lysosomal membrane"/>
    <property type="evidence" value="ECO:0007669"/>
    <property type="project" value="UniProtKB-SubCell"/>
</dbReference>
<dbReference type="GO" id="GO:0035658">
    <property type="term" value="C:Mon1-Ccz1 complex"/>
    <property type="evidence" value="ECO:0000250"/>
    <property type="project" value="UniProtKB"/>
</dbReference>
<dbReference type="GO" id="GO:0006914">
    <property type="term" value="P:autophagy"/>
    <property type="evidence" value="ECO:0007669"/>
    <property type="project" value="UniProtKB-KW"/>
</dbReference>
<dbReference type="GO" id="GO:0010506">
    <property type="term" value="P:regulation of autophagy"/>
    <property type="evidence" value="ECO:0000250"/>
    <property type="project" value="UniProtKB"/>
</dbReference>
<dbReference type="FunFam" id="2.130.10.10:FF:000436">
    <property type="entry name" value="Regulator of MON1-CCZ1 complex"/>
    <property type="match status" value="1"/>
</dbReference>
<dbReference type="Gene3D" id="2.130.10.10">
    <property type="entry name" value="YVTN repeat-like/Quinoprotein amine dehydrogenase"/>
    <property type="match status" value="1"/>
</dbReference>
<dbReference type="InterPro" id="IPR040371">
    <property type="entry name" value="RMC1"/>
</dbReference>
<dbReference type="InterPro" id="IPR009755">
    <property type="entry name" value="RMC1_C"/>
</dbReference>
<dbReference type="InterPro" id="IPR049040">
    <property type="entry name" value="RMC1_N"/>
</dbReference>
<dbReference type="InterPro" id="IPR015943">
    <property type="entry name" value="WD40/YVTN_repeat-like_dom_sf"/>
</dbReference>
<dbReference type="InterPro" id="IPR036322">
    <property type="entry name" value="WD40_repeat_dom_sf"/>
</dbReference>
<dbReference type="PANTHER" id="PTHR12897">
    <property type="entry name" value="COLON CANCER-ASSOCIATED PROTEIN MIC1"/>
    <property type="match status" value="1"/>
</dbReference>
<dbReference type="PANTHER" id="PTHR12897:SF4">
    <property type="entry name" value="REGULATOR OF MON1-CCZ1 COMPLEX"/>
    <property type="match status" value="1"/>
</dbReference>
<dbReference type="Pfam" id="PF07035">
    <property type="entry name" value="RMC1_C"/>
    <property type="match status" value="1"/>
</dbReference>
<dbReference type="Pfam" id="PF21029">
    <property type="entry name" value="RMC1_N"/>
    <property type="match status" value="1"/>
</dbReference>
<dbReference type="SUPFAM" id="SSF50978">
    <property type="entry name" value="WD40 repeat-like"/>
    <property type="match status" value="1"/>
</dbReference>
<comment type="function">
    <text evidence="1">Component of the CCZ1-MON1 RAB7A guanine exchange factor (GEF). Acts as a positive regulator of CCZ1-MON1A/B function necessary for endosomal/autophagic flux and efficient RAB7A localization.</text>
</comment>
<comment type="subunit">
    <text evidence="1">Found in a complex with RMC1, CCZ1, MON1A and MON1B.</text>
</comment>
<comment type="subcellular location">
    <subcellularLocation>
        <location evidence="1">Lysosome membrane</location>
    </subcellularLocation>
    <subcellularLocation>
        <location evidence="1">Late endosome membrane</location>
    </subcellularLocation>
</comment>
<comment type="tissue specificity">
    <text evidence="2">Highly expressed in heart, brain, spleen, lung, liver, skeletal muscle, kidney and testis.</text>
</comment>
<comment type="similarity">
    <text evidence="3">Belongs to the RMC1 family.</text>
</comment>
<comment type="sequence caution" evidence="3">
    <conflict type="erroneous initiation">
        <sequence resource="EMBL-CDS" id="AAB63375"/>
    </conflict>
</comment>
<accession>Q8VC42</accession>
<accession>O35606</accession>